<reference key="1">
    <citation type="submission" date="2002-03" db="EMBL/GenBank/DDBJ databases">
        <title>Drosophila melanogaster CYP12D1 complete cDNA.</title>
        <authorList>
            <person name="Buzeli R.A."/>
            <person name="Pedra J.H.F."/>
            <person name="Scharf M."/>
            <person name="Pittendrigh B.R."/>
        </authorList>
    </citation>
    <scope>NUCLEOTIDE SEQUENCE [MRNA]</scope>
</reference>
<reference key="2">
    <citation type="journal article" date="2000" name="Science">
        <title>The genome sequence of Drosophila melanogaster.</title>
        <authorList>
            <person name="Adams M.D."/>
            <person name="Celniker S.E."/>
            <person name="Holt R.A."/>
            <person name="Evans C.A."/>
            <person name="Gocayne J.D."/>
            <person name="Amanatides P.G."/>
            <person name="Scherer S.E."/>
            <person name="Li P.W."/>
            <person name="Hoskins R.A."/>
            <person name="Galle R.F."/>
            <person name="George R.A."/>
            <person name="Lewis S.E."/>
            <person name="Richards S."/>
            <person name="Ashburner M."/>
            <person name="Henderson S.N."/>
            <person name="Sutton G.G."/>
            <person name="Wortman J.R."/>
            <person name="Yandell M.D."/>
            <person name="Zhang Q."/>
            <person name="Chen L.X."/>
            <person name="Brandon R.C."/>
            <person name="Rogers Y.-H.C."/>
            <person name="Blazej R.G."/>
            <person name="Champe M."/>
            <person name="Pfeiffer B.D."/>
            <person name="Wan K.H."/>
            <person name="Doyle C."/>
            <person name="Baxter E.G."/>
            <person name="Helt G."/>
            <person name="Nelson C.R."/>
            <person name="Miklos G.L.G."/>
            <person name="Abril J.F."/>
            <person name="Agbayani A."/>
            <person name="An H.-J."/>
            <person name="Andrews-Pfannkoch C."/>
            <person name="Baldwin D."/>
            <person name="Ballew R.M."/>
            <person name="Basu A."/>
            <person name="Baxendale J."/>
            <person name="Bayraktaroglu L."/>
            <person name="Beasley E.M."/>
            <person name="Beeson K.Y."/>
            <person name="Benos P.V."/>
            <person name="Berman B.P."/>
            <person name="Bhandari D."/>
            <person name="Bolshakov S."/>
            <person name="Borkova D."/>
            <person name="Botchan M.R."/>
            <person name="Bouck J."/>
            <person name="Brokstein P."/>
            <person name="Brottier P."/>
            <person name="Burtis K.C."/>
            <person name="Busam D.A."/>
            <person name="Butler H."/>
            <person name="Cadieu E."/>
            <person name="Center A."/>
            <person name="Chandra I."/>
            <person name="Cherry J.M."/>
            <person name="Cawley S."/>
            <person name="Dahlke C."/>
            <person name="Davenport L.B."/>
            <person name="Davies P."/>
            <person name="de Pablos B."/>
            <person name="Delcher A."/>
            <person name="Deng Z."/>
            <person name="Mays A.D."/>
            <person name="Dew I."/>
            <person name="Dietz S.M."/>
            <person name="Dodson K."/>
            <person name="Doup L.E."/>
            <person name="Downes M."/>
            <person name="Dugan-Rocha S."/>
            <person name="Dunkov B.C."/>
            <person name="Dunn P."/>
            <person name="Durbin K.J."/>
            <person name="Evangelista C.C."/>
            <person name="Ferraz C."/>
            <person name="Ferriera S."/>
            <person name="Fleischmann W."/>
            <person name="Fosler C."/>
            <person name="Gabrielian A.E."/>
            <person name="Garg N.S."/>
            <person name="Gelbart W.M."/>
            <person name="Glasser K."/>
            <person name="Glodek A."/>
            <person name="Gong F."/>
            <person name="Gorrell J.H."/>
            <person name="Gu Z."/>
            <person name="Guan P."/>
            <person name="Harris M."/>
            <person name="Harris N.L."/>
            <person name="Harvey D.A."/>
            <person name="Heiman T.J."/>
            <person name="Hernandez J.R."/>
            <person name="Houck J."/>
            <person name="Hostin D."/>
            <person name="Houston K.A."/>
            <person name="Howland T.J."/>
            <person name="Wei M.-H."/>
            <person name="Ibegwam C."/>
            <person name="Jalali M."/>
            <person name="Kalush F."/>
            <person name="Karpen G.H."/>
            <person name="Ke Z."/>
            <person name="Kennison J.A."/>
            <person name="Ketchum K.A."/>
            <person name="Kimmel B.E."/>
            <person name="Kodira C.D."/>
            <person name="Kraft C.L."/>
            <person name="Kravitz S."/>
            <person name="Kulp D."/>
            <person name="Lai Z."/>
            <person name="Lasko P."/>
            <person name="Lei Y."/>
            <person name="Levitsky A.A."/>
            <person name="Li J.H."/>
            <person name="Li Z."/>
            <person name="Liang Y."/>
            <person name="Lin X."/>
            <person name="Liu X."/>
            <person name="Mattei B."/>
            <person name="McIntosh T.C."/>
            <person name="McLeod M.P."/>
            <person name="McPherson D."/>
            <person name="Merkulov G."/>
            <person name="Milshina N.V."/>
            <person name="Mobarry C."/>
            <person name="Morris J."/>
            <person name="Moshrefi A."/>
            <person name="Mount S.M."/>
            <person name="Moy M."/>
            <person name="Murphy B."/>
            <person name="Murphy L."/>
            <person name="Muzny D.M."/>
            <person name="Nelson D.L."/>
            <person name="Nelson D.R."/>
            <person name="Nelson K.A."/>
            <person name="Nixon K."/>
            <person name="Nusskern D.R."/>
            <person name="Pacleb J.M."/>
            <person name="Palazzolo M."/>
            <person name="Pittman G.S."/>
            <person name="Pan S."/>
            <person name="Pollard J."/>
            <person name="Puri V."/>
            <person name="Reese M.G."/>
            <person name="Reinert K."/>
            <person name="Remington K."/>
            <person name="Saunders R.D.C."/>
            <person name="Scheeler F."/>
            <person name="Shen H."/>
            <person name="Shue B.C."/>
            <person name="Siden-Kiamos I."/>
            <person name="Simpson M."/>
            <person name="Skupski M.P."/>
            <person name="Smith T.J."/>
            <person name="Spier E."/>
            <person name="Spradling A.C."/>
            <person name="Stapleton M."/>
            <person name="Strong R."/>
            <person name="Sun E."/>
            <person name="Svirskas R."/>
            <person name="Tector C."/>
            <person name="Turner R."/>
            <person name="Venter E."/>
            <person name="Wang A.H."/>
            <person name="Wang X."/>
            <person name="Wang Z.-Y."/>
            <person name="Wassarman D.A."/>
            <person name="Weinstock G.M."/>
            <person name="Weissenbach J."/>
            <person name="Williams S.M."/>
            <person name="Woodage T."/>
            <person name="Worley K.C."/>
            <person name="Wu D."/>
            <person name="Yang S."/>
            <person name="Yao Q.A."/>
            <person name="Ye J."/>
            <person name="Yeh R.-F."/>
            <person name="Zaveri J.S."/>
            <person name="Zhan M."/>
            <person name="Zhang G."/>
            <person name="Zhao Q."/>
            <person name="Zheng L."/>
            <person name="Zheng X.H."/>
            <person name="Zhong F.N."/>
            <person name="Zhong W."/>
            <person name="Zhou X."/>
            <person name="Zhu S.C."/>
            <person name="Zhu X."/>
            <person name="Smith H.O."/>
            <person name="Gibbs R.A."/>
            <person name="Myers E.W."/>
            <person name="Rubin G.M."/>
            <person name="Venter J.C."/>
        </authorList>
    </citation>
    <scope>NUCLEOTIDE SEQUENCE [LARGE SCALE GENOMIC DNA]</scope>
    <source>
        <strain>Berkeley</strain>
    </source>
</reference>
<reference key="3">
    <citation type="journal article" date="2002" name="Genome Biol.">
        <title>Annotation of the Drosophila melanogaster euchromatic genome: a systematic review.</title>
        <authorList>
            <person name="Misra S."/>
            <person name="Crosby M.A."/>
            <person name="Mungall C.J."/>
            <person name="Matthews B.B."/>
            <person name="Campbell K.S."/>
            <person name="Hradecky P."/>
            <person name="Huang Y."/>
            <person name="Kaminker J.S."/>
            <person name="Millburn G.H."/>
            <person name="Prochnik S.E."/>
            <person name="Smith C.D."/>
            <person name="Tupy J.L."/>
            <person name="Whitfield E.J."/>
            <person name="Bayraktaroglu L."/>
            <person name="Berman B.P."/>
            <person name="Bettencourt B.R."/>
            <person name="Celniker S.E."/>
            <person name="de Grey A.D.N.J."/>
            <person name="Drysdale R.A."/>
            <person name="Harris N.L."/>
            <person name="Richter J."/>
            <person name="Russo S."/>
            <person name="Schroeder A.J."/>
            <person name="Shu S.Q."/>
            <person name="Stapleton M."/>
            <person name="Yamada C."/>
            <person name="Ashburner M."/>
            <person name="Gelbart W.M."/>
            <person name="Rubin G.M."/>
            <person name="Lewis S.E."/>
        </authorList>
    </citation>
    <scope>GENOME REANNOTATION</scope>
    <source>
        <strain>Berkeley</strain>
    </source>
</reference>
<reference key="4">
    <citation type="journal article" date="2005" name="Insect Mol. Biol.">
        <title>Expression of Cyp6g1 and Cyp12d1 in DDT resistant and susceptible strains of Drosophila melanogaster.</title>
        <authorList>
            <person name="Festucci-Buselli R.A."/>
            <person name="Carvalho-Dias A.S."/>
            <person name="de Oliveira-Andrade M."/>
            <person name="Caixeta-Nunes C."/>
            <person name="Li H.-M."/>
            <person name="Stuart J.J."/>
            <person name="Muir W."/>
            <person name="Scharf M.E."/>
            <person name="Pittendrigh B.R."/>
        </authorList>
    </citation>
    <scope>DEVELOPMENTAL STAGE</scope>
</reference>
<feature type="transit peptide" description="Mitochondrion" evidence="2">
    <location>
        <begin position="1"/>
        <end position="19"/>
    </location>
</feature>
<feature type="chain" id="PRO_0000003613" description="Probable cytochrome P450 12d1 proximal, mitochondrial">
    <location>
        <begin position="20"/>
        <end position="521"/>
    </location>
</feature>
<feature type="binding site" description="axial binding residue" evidence="1">
    <location>
        <position position="467"/>
    </location>
    <ligand>
        <name>heme</name>
        <dbReference type="ChEBI" id="CHEBI:30413"/>
    </ligand>
    <ligandPart>
        <name>Fe</name>
        <dbReference type="ChEBI" id="CHEBI:18248"/>
    </ligandPart>
</feature>
<feature type="sequence conflict" description="In Ref. 1; AAL89789." evidence="4" ref="1">
    <original>A</original>
    <variation>S</variation>
    <location>
        <position position="277"/>
    </location>
</feature>
<feature type="sequence conflict" description="In Ref. 1; AAL89789." evidence="4" ref="1">
    <original>L</original>
    <variation>F</variation>
    <location>
        <position position="392"/>
    </location>
</feature>
<organism>
    <name type="scientific">Drosophila melanogaster</name>
    <name type="common">Fruit fly</name>
    <dbReference type="NCBI Taxonomy" id="7227"/>
    <lineage>
        <taxon>Eukaryota</taxon>
        <taxon>Metazoa</taxon>
        <taxon>Ecdysozoa</taxon>
        <taxon>Arthropoda</taxon>
        <taxon>Hexapoda</taxon>
        <taxon>Insecta</taxon>
        <taxon>Pterygota</taxon>
        <taxon>Neoptera</taxon>
        <taxon>Endopterygota</taxon>
        <taxon>Diptera</taxon>
        <taxon>Brachycera</taxon>
        <taxon>Muscomorpha</taxon>
        <taxon>Ephydroidea</taxon>
        <taxon>Drosophilidae</taxon>
        <taxon>Drosophila</taxon>
        <taxon>Sophophora</taxon>
    </lineage>
</organism>
<evidence type="ECO:0000250" key="1"/>
<evidence type="ECO:0000255" key="2"/>
<evidence type="ECO:0000269" key="3">
    <source>
    </source>
</evidence>
<evidence type="ECO:0000305" key="4"/>
<comment type="cofactor">
    <cofactor evidence="1">
        <name>heme</name>
        <dbReference type="ChEBI" id="CHEBI:30413"/>
    </cofactor>
</comment>
<comment type="subcellular location">
    <subcellularLocation>
        <location evidence="4">Mitochondrion membrane</location>
    </subcellularLocation>
</comment>
<comment type="developmental stage">
    <text evidence="3">Only expressed in adults. Expression varies in DDT resistant strains (Wisconsin, 91-R and Hikone-R).</text>
</comment>
<comment type="similarity">
    <text evidence="4">Belongs to the cytochrome P450 family.</text>
</comment>
<dbReference type="EC" id="1.14.-.-"/>
<dbReference type="EMBL" id="AY081961">
    <property type="protein sequence ID" value="AAL89789.1"/>
    <property type="molecule type" value="mRNA"/>
</dbReference>
<dbReference type="EMBL" id="AE013599">
    <property type="protein sequence ID" value="AAM68745.1"/>
    <property type="molecule type" value="Genomic_DNA"/>
</dbReference>
<dbReference type="RefSeq" id="NP_001286304.1">
    <property type="nucleotide sequence ID" value="NM_001299375.1"/>
</dbReference>
<dbReference type="RefSeq" id="NP_610635.4">
    <property type="nucleotide sequence ID" value="NM_136791.6"/>
</dbReference>
<dbReference type="SMR" id="P82712"/>
<dbReference type="BioGRID" id="73191">
    <property type="interactions" value="64"/>
</dbReference>
<dbReference type="FunCoup" id="P82712">
    <property type="interactions" value="10"/>
</dbReference>
<dbReference type="IntAct" id="P82712">
    <property type="interactions" value="9"/>
</dbReference>
<dbReference type="STRING" id="7227.FBpp0311725"/>
<dbReference type="PaxDb" id="7227-FBpp0088437"/>
<dbReference type="EnsemblMetazoa" id="FBtr0089419">
    <property type="protein sequence ID" value="FBpp0088437"/>
    <property type="gene ID" value="FBgn0050489"/>
</dbReference>
<dbReference type="EnsemblMetazoa" id="FBtr0345674">
    <property type="protein sequence ID" value="FBpp0311725"/>
    <property type="gene ID" value="FBgn0050489"/>
</dbReference>
<dbReference type="GeneID" id="246648"/>
<dbReference type="KEGG" id="dme:Dmel_CG30489"/>
<dbReference type="UCSC" id="CG30489-RA">
    <property type="organism name" value="d. melanogaster"/>
</dbReference>
<dbReference type="AGR" id="FB:FBgn0050489"/>
<dbReference type="CTD" id="246648"/>
<dbReference type="FlyBase" id="FBgn0050489">
    <property type="gene designation" value="Cyp12d1-p"/>
</dbReference>
<dbReference type="VEuPathDB" id="VectorBase:FBgn0050489"/>
<dbReference type="eggNOG" id="KOG0159">
    <property type="taxonomic scope" value="Eukaryota"/>
</dbReference>
<dbReference type="GeneTree" id="ENSGT00940000165868"/>
<dbReference type="HOGENOM" id="CLU_001570_28_0_1"/>
<dbReference type="InParanoid" id="P82712"/>
<dbReference type="OMA" id="PVFMQPR"/>
<dbReference type="OrthoDB" id="3945418at2759"/>
<dbReference type="PhylomeDB" id="P82712"/>
<dbReference type="BioGRID-ORCS" id="246648">
    <property type="hits" value="0 hits in 3 CRISPR screens"/>
</dbReference>
<dbReference type="ChiTaRS" id="Cyp12d1-p">
    <property type="organism name" value="fly"/>
</dbReference>
<dbReference type="GenomeRNAi" id="246648"/>
<dbReference type="PRO" id="PR:P82712"/>
<dbReference type="Proteomes" id="UP000000803">
    <property type="component" value="Chromosome 2R"/>
</dbReference>
<dbReference type="Bgee" id="FBgn0050489">
    <property type="expression patterns" value="Expressed in fat body cell in digestive tract and 47 other cell types or tissues"/>
</dbReference>
<dbReference type="ExpressionAtlas" id="P82712">
    <property type="expression patterns" value="baseline and differential"/>
</dbReference>
<dbReference type="GO" id="GO:0031966">
    <property type="term" value="C:mitochondrial membrane"/>
    <property type="evidence" value="ECO:0007669"/>
    <property type="project" value="UniProtKB-SubCell"/>
</dbReference>
<dbReference type="GO" id="GO:0020037">
    <property type="term" value="F:heme binding"/>
    <property type="evidence" value="ECO:0007669"/>
    <property type="project" value="InterPro"/>
</dbReference>
<dbReference type="GO" id="GO:0005506">
    <property type="term" value="F:iron ion binding"/>
    <property type="evidence" value="ECO:0007669"/>
    <property type="project" value="InterPro"/>
</dbReference>
<dbReference type="GO" id="GO:0004497">
    <property type="term" value="F:monooxygenase activity"/>
    <property type="evidence" value="ECO:0007669"/>
    <property type="project" value="UniProtKB-KW"/>
</dbReference>
<dbReference type="GO" id="GO:0016705">
    <property type="term" value="F:oxidoreductase activity, acting on paired donors, with incorporation or reduction of molecular oxygen"/>
    <property type="evidence" value="ECO:0007669"/>
    <property type="project" value="InterPro"/>
</dbReference>
<dbReference type="GO" id="GO:0046680">
    <property type="term" value="P:response to DDT"/>
    <property type="evidence" value="ECO:0000315"/>
    <property type="project" value="FlyBase"/>
</dbReference>
<dbReference type="GO" id="GO:0017085">
    <property type="term" value="P:response to insecticide"/>
    <property type="evidence" value="ECO:0000315"/>
    <property type="project" value="FlyBase"/>
</dbReference>
<dbReference type="CDD" id="cd11054">
    <property type="entry name" value="CYP24A1-like"/>
    <property type="match status" value="1"/>
</dbReference>
<dbReference type="FunFam" id="1.10.630.10:FF:000006">
    <property type="entry name" value="Cytochrome P450 302a1, mitochondrial"/>
    <property type="match status" value="1"/>
</dbReference>
<dbReference type="Gene3D" id="1.10.630.10">
    <property type="entry name" value="Cytochrome P450"/>
    <property type="match status" value="1"/>
</dbReference>
<dbReference type="InterPro" id="IPR050479">
    <property type="entry name" value="CYP11_CYP27_families"/>
</dbReference>
<dbReference type="InterPro" id="IPR001128">
    <property type="entry name" value="Cyt_P450"/>
</dbReference>
<dbReference type="InterPro" id="IPR017972">
    <property type="entry name" value="Cyt_P450_CS"/>
</dbReference>
<dbReference type="InterPro" id="IPR002401">
    <property type="entry name" value="Cyt_P450_E_grp-I"/>
</dbReference>
<dbReference type="InterPro" id="IPR036396">
    <property type="entry name" value="Cyt_P450_sf"/>
</dbReference>
<dbReference type="PANTHER" id="PTHR24279">
    <property type="entry name" value="CYTOCHROME P450"/>
    <property type="match status" value="1"/>
</dbReference>
<dbReference type="PANTHER" id="PTHR24279:SF120">
    <property type="entry name" value="CYTOCHROME P450"/>
    <property type="match status" value="1"/>
</dbReference>
<dbReference type="Pfam" id="PF00067">
    <property type="entry name" value="p450"/>
    <property type="match status" value="1"/>
</dbReference>
<dbReference type="PRINTS" id="PR00463">
    <property type="entry name" value="EP450I"/>
</dbReference>
<dbReference type="PRINTS" id="PR00385">
    <property type="entry name" value="P450"/>
</dbReference>
<dbReference type="SUPFAM" id="SSF48264">
    <property type="entry name" value="Cytochrome P450"/>
    <property type="match status" value="1"/>
</dbReference>
<dbReference type="PROSITE" id="PS00086">
    <property type="entry name" value="CYTOCHROME_P450"/>
    <property type="match status" value="1"/>
</dbReference>
<name>CCD1P_DROME</name>
<sequence>MNTLSSARSVAIYVGPVRSSRSASVLAHEQAKSSITEEHKTYDEIPRPNKFKFMRAFMPGGEFQNASITEYTSAMRKRYGDIYVMPGMFGRKDWVTTFNTKDIEMVFRNEGIWPRRDGLDSIVYFREHVRPDVYGEVQGLVASQNEAWGKLRSAINPIFMQPRGLRMYYEPLSNINNEFIERIKEIRDPKTLEVPEDFTDEISRLVFESLGLVAFDRQMGLIRKNRDNSDALTLFQTSRDIFRLTFKLDIQPSMWKIISTPTYRKMKRTLNDSLNVAQKMLKENQDALEKRRQAGEKINSNSMLERLMEIDPKVAVIMSLDILFAGVDATATLLSAVLLCLSKHPDKQAKLREELLSIMPTKDSLLNEENMKDMPYLRAVIKETLRYYPNGLGTMRTCQNDVILSGYRVPKGTTVLLGSNVLMKEATYYPRPDEFLPERWLRDPETGKKMQVSPFTFLPFGFGPRMCIGKRVVDLEMETTVAKLIRNFHVEFNRDASRPFKTMFVMEPAITFPFKFTDIEQ</sequence>
<protein>
    <recommendedName>
        <fullName>Probable cytochrome P450 12d1 proximal, mitochondrial</fullName>
        <ecNumber>1.14.-.-</ecNumber>
    </recommendedName>
    <alternativeName>
        <fullName>CYPXIID1</fullName>
    </alternativeName>
</protein>
<proteinExistence type="evidence at transcript level"/>
<keyword id="KW-0349">Heme</keyword>
<keyword id="KW-0408">Iron</keyword>
<keyword id="KW-0472">Membrane</keyword>
<keyword id="KW-0479">Metal-binding</keyword>
<keyword id="KW-0496">Mitochondrion</keyword>
<keyword id="KW-0503">Monooxygenase</keyword>
<keyword id="KW-0560">Oxidoreductase</keyword>
<keyword id="KW-1185">Reference proteome</keyword>
<keyword id="KW-0809">Transit peptide</keyword>
<gene>
    <name type="primary">Cyp12d1-p</name>
    <name type="synonym">Cyp12d1</name>
    <name type="ORF">CG30489</name>
</gene>
<accession>P82712</accession>
<accession>Q8IH46</accession>
<accession>Q8T4K3</accession>